<reference key="1">
    <citation type="journal article" date="2005" name="Nature">
        <title>The map-based sequence of the rice genome.</title>
        <authorList>
            <consortium name="International rice genome sequencing project (IRGSP)"/>
        </authorList>
    </citation>
    <scope>NUCLEOTIDE SEQUENCE [LARGE SCALE GENOMIC DNA]</scope>
    <source>
        <strain>cv. Nipponbare</strain>
    </source>
</reference>
<reference key="2">
    <citation type="journal article" date="2008" name="Nucleic Acids Res.">
        <title>The rice annotation project database (RAP-DB): 2008 update.</title>
        <authorList>
            <consortium name="The rice annotation project (RAP)"/>
        </authorList>
    </citation>
    <scope>GENOME REANNOTATION</scope>
    <source>
        <strain>cv. Nipponbare</strain>
    </source>
</reference>
<reference key="3">
    <citation type="journal article" date="2013" name="Rice">
        <title>Improvement of the Oryza sativa Nipponbare reference genome using next generation sequence and optical map data.</title>
        <authorList>
            <person name="Kawahara Y."/>
            <person name="de la Bastide M."/>
            <person name="Hamilton J.P."/>
            <person name="Kanamori H."/>
            <person name="McCombie W.R."/>
            <person name="Ouyang S."/>
            <person name="Schwartz D.C."/>
            <person name="Tanaka T."/>
            <person name="Wu J."/>
            <person name="Zhou S."/>
            <person name="Childs K.L."/>
            <person name="Davidson R.M."/>
            <person name="Lin H."/>
            <person name="Quesada-Ocampo L."/>
            <person name="Vaillancourt B."/>
            <person name="Sakai H."/>
            <person name="Lee S.S."/>
            <person name="Kim J."/>
            <person name="Numa H."/>
            <person name="Itoh T."/>
            <person name="Buell C.R."/>
            <person name="Matsumoto T."/>
        </authorList>
    </citation>
    <scope>GENOME REANNOTATION</scope>
    <source>
        <strain>cv. Nipponbare</strain>
    </source>
</reference>
<reference key="4">
    <citation type="journal article" date="2005" name="PLoS Biol.">
        <title>The genomes of Oryza sativa: a history of duplications.</title>
        <authorList>
            <person name="Yu J."/>
            <person name="Wang J."/>
            <person name="Lin W."/>
            <person name="Li S."/>
            <person name="Li H."/>
            <person name="Zhou J."/>
            <person name="Ni P."/>
            <person name="Dong W."/>
            <person name="Hu S."/>
            <person name="Zeng C."/>
            <person name="Zhang J."/>
            <person name="Zhang Y."/>
            <person name="Li R."/>
            <person name="Xu Z."/>
            <person name="Li S."/>
            <person name="Li X."/>
            <person name="Zheng H."/>
            <person name="Cong L."/>
            <person name="Lin L."/>
            <person name="Yin J."/>
            <person name="Geng J."/>
            <person name="Li G."/>
            <person name="Shi J."/>
            <person name="Liu J."/>
            <person name="Lv H."/>
            <person name="Li J."/>
            <person name="Wang J."/>
            <person name="Deng Y."/>
            <person name="Ran L."/>
            <person name="Shi X."/>
            <person name="Wang X."/>
            <person name="Wu Q."/>
            <person name="Li C."/>
            <person name="Ren X."/>
            <person name="Wang J."/>
            <person name="Wang X."/>
            <person name="Li D."/>
            <person name="Liu D."/>
            <person name="Zhang X."/>
            <person name="Ji Z."/>
            <person name="Zhao W."/>
            <person name="Sun Y."/>
            <person name="Zhang Z."/>
            <person name="Bao J."/>
            <person name="Han Y."/>
            <person name="Dong L."/>
            <person name="Ji J."/>
            <person name="Chen P."/>
            <person name="Wu S."/>
            <person name="Liu J."/>
            <person name="Xiao Y."/>
            <person name="Bu D."/>
            <person name="Tan J."/>
            <person name="Yang L."/>
            <person name="Ye C."/>
            <person name="Zhang J."/>
            <person name="Xu J."/>
            <person name="Zhou Y."/>
            <person name="Yu Y."/>
            <person name="Zhang B."/>
            <person name="Zhuang S."/>
            <person name="Wei H."/>
            <person name="Liu B."/>
            <person name="Lei M."/>
            <person name="Yu H."/>
            <person name="Li Y."/>
            <person name="Xu H."/>
            <person name="Wei S."/>
            <person name="He X."/>
            <person name="Fang L."/>
            <person name="Zhang Z."/>
            <person name="Zhang Y."/>
            <person name="Huang X."/>
            <person name="Su Z."/>
            <person name="Tong W."/>
            <person name="Li J."/>
            <person name="Tong Z."/>
            <person name="Li S."/>
            <person name="Ye J."/>
            <person name="Wang L."/>
            <person name="Fang L."/>
            <person name="Lei T."/>
            <person name="Chen C.-S."/>
            <person name="Chen H.-C."/>
            <person name="Xu Z."/>
            <person name="Li H."/>
            <person name="Huang H."/>
            <person name="Zhang F."/>
            <person name="Xu H."/>
            <person name="Li N."/>
            <person name="Zhao C."/>
            <person name="Li S."/>
            <person name="Dong L."/>
            <person name="Huang Y."/>
            <person name="Li L."/>
            <person name="Xi Y."/>
            <person name="Qi Q."/>
            <person name="Li W."/>
            <person name="Zhang B."/>
            <person name="Hu W."/>
            <person name="Zhang Y."/>
            <person name="Tian X."/>
            <person name="Jiao Y."/>
            <person name="Liang X."/>
            <person name="Jin J."/>
            <person name="Gao L."/>
            <person name="Zheng W."/>
            <person name="Hao B."/>
            <person name="Liu S.-M."/>
            <person name="Wang W."/>
            <person name="Yuan L."/>
            <person name="Cao M."/>
            <person name="McDermott J."/>
            <person name="Samudrala R."/>
            <person name="Wang J."/>
            <person name="Wong G.K.-S."/>
            <person name="Yang H."/>
        </authorList>
    </citation>
    <scope>NUCLEOTIDE SEQUENCE [LARGE SCALE GENOMIC DNA]</scope>
    <source>
        <strain>cv. Nipponbare</strain>
    </source>
</reference>
<reference key="5">
    <citation type="journal article" date="2010" name="Nature">
        <title>Sugar transporters for intercellular exchange and nutrition of pathogens.</title>
        <authorList>
            <person name="Chen L.-Q."/>
            <person name="Hou B.-H."/>
            <person name="Lalonde S."/>
            <person name="Takanaga H."/>
            <person name="Hartung M.L."/>
            <person name="Qu X.-Q."/>
            <person name="Guo W.-J."/>
            <person name="Kim J.-G."/>
            <person name="Underwood W."/>
            <person name="Chaudhuri B."/>
            <person name="Chermak D."/>
            <person name="Antony G."/>
            <person name="White F.F."/>
            <person name="Somerville S.C."/>
            <person name="Mudgett M.B."/>
            <person name="Frommer W.B."/>
        </authorList>
    </citation>
    <scope>GENE FAMILY</scope>
    <scope>NOMENCLATURE</scope>
</reference>
<name>SWT7D_ORYSJ</name>
<feature type="chain" id="PRO_0000404131" description="Putative bidirectional sugar transporter SWEET7d">
    <location>
        <begin position="1"/>
        <end position="274"/>
    </location>
</feature>
<feature type="topological domain" description="Extracellular" evidence="4">
    <location>
        <begin position="1"/>
        <end position="8"/>
    </location>
</feature>
<feature type="transmembrane region" description="Helical; Name=1" evidence="2">
    <location>
        <begin position="9"/>
        <end position="29"/>
    </location>
</feature>
<feature type="topological domain" description="Cytoplasmic" evidence="4">
    <location>
        <begin position="30"/>
        <end position="45"/>
    </location>
</feature>
<feature type="transmembrane region" description="Helical; Name=2" evidence="2">
    <location>
        <begin position="46"/>
        <end position="66"/>
    </location>
</feature>
<feature type="topological domain" description="Extracellular" evidence="4">
    <location>
        <begin position="67"/>
        <end position="68"/>
    </location>
</feature>
<feature type="transmembrane region" description="Helical; Name=3" evidence="2">
    <location>
        <begin position="69"/>
        <end position="89"/>
    </location>
</feature>
<feature type="topological domain" description="Cytoplasmic" evidence="4">
    <location>
        <begin position="90"/>
        <end position="100"/>
    </location>
</feature>
<feature type="transmembrane region" description="Helical; Name=4" evidence="2">
    <location>
        <begin position="101"/>
        <end position="121"/>
    </location>
</feature>
<feature type="topological domain" description="Extracellular" evidence="4">
    <location>
        <begin position="122"/>
        <end position="130"/>
    </location>
</feature>
<feature type="transmembrane region" description="Helical; Name=5" evidence="2">
    <location>
        <begin position="131"/>
        <end position="151"/>
    </location>
</feature>
<feature type="topological domain" description="Cytoplasmic" evidence="4">
    <location>
        <begin position="152"/>
        <end position="164"/>
    </location>
</feature>
<feature type="transmembrane region" description="Helical; Name=6" evidence="2">
    <location>
        <begin position="165"/>
        <end position="185"/>
    </location>
</feature>
<feature type="topological domain" description="Extracellular" evidence="4">
    <location>
        <begin position="186"/>
        <end position="188"/>
    </location>
</feature>
<feature type="transmembrane region" description="Helical; Name=7" evidence="2">
    <location>
        <begin position="189"/>
        <end position="209"/>
    </location>
</feature>
<feature type="topological domain" description="Cytoplasmic" evidence="4">
    <location>
        <begin position="210"/>
        <end position="274"/>
    </location>
</feature>
<feature type="domain" description="MtN3/slv 1" evidence="4">
    <location>
        <begin position="9"/>
        <end position="96"/>
    </location>
</feature>
<feature type="domain" description="MtN3/slv 2" evidence="4">
    <location>
        <begin position="132"/>
        <end position="214"/>
    </location>
</feature>
<feature type="region of interest" description="Disordered" evidence="3">
    <location>
        <begin position="218"/>
        <end position="274"/>
    </location>
</feature>
<feature type="compositionally biased region" description="Low complexity" evidence="3">
    <location>
        <begin position="245"/>
        <end position="258"/>
    </location>
</feature>
<dbReference type="EMBL" id="AP008215">
    <property type="protein sequence ID" value="BAF24618.1"/>
    <property type="status" value="ALT_SEQ"/>
    <property type="molecule type" value="Genomic_DNA"/>
</dbReference>
<dbReference type="EMBL" id="AP014965">
    <property type="status" value="NOT_ANNOTATED_CDS"/>
    <property type="molecule type" value="Genomic_DNA"/>
</dbReference>
<dbReference type="EMBL" id="CM000146">
    <property type="protein sequence ID" value="EEE69292.1"/>
    <property type="status" value="ALT_SEQ"/>
    <property type="molecule type" value="Genomic_DNA"/>
</dbReference>
<dbReference type="SMR" id="B9G2E6"/>
<dbReference type="FunCoup" id="B9G2E6">
    <property type="interactions" value="297"/>
</dbReference>
<dbReference type="PaxDb" id="39947-B9G2E6"/>
<dbReference type="KEGG" id="dosa:Os09g0259200"/>
<dbReference type="InParanoid" id="B9G2E6"/>
<dbReference type="Proteomes" id="UP000000763">
    <property type="component" value="Chromosome 9"/>
</dbReference>
<dbReference type="Proteomes" id="UP000007752">
    <property type="component" value="Chromosome 9"/>
</dbReference>
<dbReference type="Proteomes" id="UP000059680">
    <property type="component" value="Chromosome 9"/>
</dbReference>
<dbReference type="GO" id="GO:0016020">
    <property type="term" value="C:membrane"/>
    <property type="evidence" value="ECO:0000318"/>
    <property type="project" value="GO_Central"/>
</dbReference>
<dbReference type="GO" id="GO:0005886">
    <property type="term" value="C:plasma membrane"/>
    <property type="evidence" value="ECO:0000250"/>
    <property type="project" value="UniProtKB"/>
</dbReference>
<dbReference type="GO" id="GO:0051119">
    <property type="term" value="F:sugar transmembrane transporter activity"/>
    <property type="evidence" value="ECO:0000250"/>
    <property type="project" value="UniProtKB"/>
</dbReference>
<dbReference type="GO" id="GO:0008643">
    <property type="term" value="P:carbohydrate transport"/>
    <property type="evidence" value="ECO:0000318"/>
    <property type="project" value="GO_Central"/>
</dbReference>
<dbReference type="FunFam" id="1.20.1280.290:FF:000001">
    <property type="entry name" value="Bidirectional sugar transporter SWEET"/>
    <property type="match status" value="1"/>
</dbReference>
<dbReference type="FunFam" id="1.20.1280.290:FF:000002">
    <property type="entry name" value="Bidirectional sugar transporter SWEET"/>
    <property type="match status" value="1"/>
</dbReference>
<dbReference type="Gene3D" id="1.20.1280.290">
    <property type="match status" value="2"/>
</dbReference>
<dbReference type="InterPro" id="IPR047664">
    <property type="entry name" value="SWEET"/>
</dbReference>
<dbReference type="InterPro" id="IPR004316">
    <property type="entry name" value="SWEET_rpt"/>
</dbReference>
<dbReference type="PANTHER" id="PTHR10791">
    <property type="entry name" value="RAG1-ACTIVATING PROTEIN 1"/>
    <property type="match status" value="1"/>
</dbReference>
<dbReference type="PANTHER" id="PTHR10791:SF30">
    <property type="entry name" value="SUGAR TRANSPORTER SWEET1"/>
    <property type="match status" value="1"/>
</dbReference>
<dbReference type="Pfam" id="PF03083">
    <property type="entry name" value="MtN3_slv"/>
    <property type="match status" value="2"/>
</dbReference>
<sequence length="274" mass="30283">MVPDLIRNVVGIVGNVISFGLFLSPVPTFWRIIKNKDVRDFKADQYLATLLNCMLWVFYGLPIVHPNSILVVTINGIGLVIEAVYLTIFFLFSDKKNKKKMGVVLATEALFMAAVALGVLLDAHTHQRRSLIVGILCVIFGTIMYSSPLTIMSQVVKTKSVEYMPLLLSVVSFLNGLCWTSYALIRFDIFITIPNGLGVLFALMQLILYAIYYRTTPKKPSTTGPHPRSRIRTSSYQPSPPSPRAPASSPLSARTTTSMAAMSPSISRLSHKLA</sequence>
<keyword id="KW-1003">Cell membrane</keyword>
<keyword id="KW-0472">Membrane</keyword>
<keyword id="KW-1185">Reference proteome</keyword>
<keyword id="KW-0677">Repeat</keyword>
<keyword id="KW-0762">Sugar transport</keyword>
<keyword id="KW-0812">Transmembrane</keyword>
<keyword id="KW-1133">Transmembrane helix</keyword>
<keyword id="KW-0813">Transport</keyword>
<accession>B9G2E6</accession>
<accession>Q0J347</accession>
<evidence type="ECO:0000250" key="1">
    <source>
        <dbReference type="UniProtKB" id="Q8L9J7"/>
    </source>
</evidence>
<evidence type="ECO:0000255" key="2"/>
<evidence type="ECO:0000256" key="3">
    <source>
        <dbReference type="SAM" id="MobiDB-lite"/>
    </source>
</evidence>
<evidence type="ECO:0000305" key="4"/>
<proteinExistence type="inferred from homology"/>
<protein>
    <recommendedName>
        <fullName>Putative bidirectional sugar transporter SWEET7d</fullName>
        <shortName>OsSWEET7d</shortName>
    </recommendedName>
</protein>
<organism>
    <name type="scientific">Oryza sativa subsp. japonica</name>
    <name type="common">Rice</name>
    <dbReference type="NCBI Taxonomy" id="39947"/>
    <lineage>
        <taxon>Eukaryota</taxon>
        <taxon>Viridiplantae</taxon>
        <taxon>Streptophyta</taxon>
        <taxon>Embryophyta</taxon>
        <taxon>Tracheophyta</taxon>
        <taxon>Spermatophyta</taxon>
        <taxon>Magnoliopsida</taxon>
        <taxon>Liliopsida</taxon>
        <taxon>Poales</taxon>
        <taxon>Poaceae</taxon>
        <taxon>BOP clade</taxon>
        <taxon>Oryzoideae</taxon>
        <taxon>Oryzeae</taxon>
        <taxon>Oryzinae</taxon>
        <taxon>Oryza</taxon>
        <taxon>Oryza sativa</taxon>
    </lineage>
</organism>
<gene>
    <name type="primary">SWEET7D</name>
    <name type="ordered locus">Os09g0259200</name>
    <name type="ordered locus">LOC_Os09g08490</name>
    <name type="ORF">OsJ_28570</name>
</gene>
<comment type="function">
    <text evidence="1">Mediates both low-affinity uptake and efflux of sugar across the plasma membrane.</text>
</comment>
<comment type="subunit">
    <text evidence="1">Forms homooligomers and/or heterooligomers.</text>
</comment>
<comment type="subcellular location">
    <subcellularLocation>
        <location evidence="1">Cell membrane</location>
        <topology evidence="1">Multi-pass membrane protein</topology>
    </subcellularLocation>
</comment>
<comment type="similarity">
    <text evidence="4">Belongs to the SWEET sugar transporter family.</text>
</comment>
<comment type="sequence caution" evidence="4">
    <conflict type="erroneous gene model prediction">
        <sequence resource="EMBL-CDS" id="BAF24618"/>
    </conflict>
</comment>
<comment type="sequence caution" evidence="4">
    <conflict type="erroneous gene model prediction">
        <sequence resource="EMBL-CDS" id="EEE69292"/>
    </conflict>
</comment>